<proteinExistence type="inferred from homology"/>
<feature type="chain" id="PRO_1000058879" description="Adenylate kinase">
    <location>
        <begin position="1"/>
        <end position="215"/>
    </location>
</feature>
<feature type="region of interest" description="NMP" evidence="1">
    <location>
        <begin position="30"/>
        <end position="59"/>
    </location>
</feature>
<feature type="region of interest" description="LID" evidence="1">
    <location>
        <begin position="122"/>
        <end position="159"/>
    </location>
</feature>
<feature type="binding site" evidence="1">
    <location>
        <begin position="10"/>
        <end position="15"/>
    </location>
    <ligand>
        <name>ATP</name>
        <dbReference type="ChEBI" id="CHEBI:30616"/>
    </ligand>
</feature>
<feature type="binding site" evidence="1">
    <location>
        <position position="31"/>
    </location>
    <ligand>
        <name>AMP</name>
        <dbReference type="ChEBI" id="CHEBI:456215"/>
    </ligand>
</feature>
<feature type="binding site" evidence="1">
    <location>
        <position position="36"/>
    </location>
    <ligand>
        <name>AMP</name>
        <dbReference type="ChEBI" id="CHEBI:456215"/>
    </ligand>
</feature>
<feature type="binding site" evidence="1">
    <location>
        <begin position="57"/>
        <end position="59"/>
    </location>
    <ligand>
        <name>AMP</name>
        <dbReference type="ChEBI" id="CHEBI:456215"/>
    </ligand>
</feature>
<feature type="binding site" evidence="1">
    <location>
        <begin position="85"/>
        <end position="88"/>
    </location>
    <ligand>
        <name>AMP</name>
        <dbReference type="ChEBI" id="CHEBI:456215"/>
    </ligand>
</feature>
<feature type="binding site" evidence="1">
    <location>
        <position position="92"/>
    </location>
    <ligand>
        <name>AMP</name>
        <dbReference type="ChEBI" id="CHEBI:456215"/>
    </ligand>
</feature>
<feature type="binding site" evidence="1">
    <location>
        <position position="123"/>
    </location>
    <ligand>
        <name>ATP</name>
        <dbReference type="ChEBI" id="CHEBI:30616"/>
    </ligand>
</feature>
<feature type="binding site" evidence="1">
    <location>
        <begin position="132"/>
        <end position="133"/>
    </location>
    <ligand>
        <name>ATP</name>
        <dbReference type="ChEBI" id="CHEBI:30616"/>
    </ligand>
</feature>
<feature type="binding site" evidence="1">
    <location>
        <position position="156"/>
    </location>
    <ligand>
        <name>AMP</name>
        <dbReference type="ChEBI" id="CHEBI:456215"/>
    </ligand>
</feature>
<feature type="binding site" evidence="1">
    <location>
        <position position="167"/>
    </location>
    <ligand>
        <name>AMP</name>
        <dbReference type="ChEBI" id="CHEBI:456215"/>
    </ligand>
</feature>
<feature type="binding site" evidence="1">
    <location>
        <position position="201"/>
    </location>
    <ligand>
        <name>ATP</name>
        <dbReference type="ChEBI" id="CHEBI:30616"/>
    </ligand>
</feature>
<organism>
    <name type="scientific">Pseudomonas savastanoi pv. phaseolicola (strain 1448A / Race 6)</name>
    <name type="common">Pseudomonas syringae pv. phaseolicola (strain 1448A / Race 6)</name>
    <dbReference type="NCBI Taxonomy" id="264730"/>
    <lineage>
        <taxon>Bacteria</taxon>
        <taxon>Pseudomonadati</taxon>
        <taxon>Pseudomonadota</taxon>
        <taxon>Gammaproteobacteria</taxon>
        <taxon>Pseudomonadales</taxon>
        <taxon>Pseudomonadaceae</taxon>
        <taxon>Pseudomonas</taxon>
    </lineage>
</organism>
<protein>
    <recommendedName>
        <fullName evidence="1">Adenylate kinase</fullName>
        <shortName evidence="1">AK</shortName>
        <ecNumber evidence="1">2.7.4.3</ecNumber>
    </recommendedName>
    <alternativeName>
        <fullName evidence="1">ATP-AMP transphosphorylase</fullName>
    </alternativeName>
    <alternativeName>
        <fullName evidence="1">ATP:AMP phosphotransferase</fullName>
    </alternativeName>
    <alternativeName>
        <fullName evidence="1">Adenylate monophosphate kinase</fullName>
    </alternativeName>
</protein>
<name>KAD_PSE14</name>
<comment type="function">
    <text evidence="1">Catalyzes the reversible transfer of the terminal phosphate group between ATP and AMP. Plays an important role in cellular energy homeostasis and in adenine nucleotide metabolism.</text>
</comment>
<comment type="catalytic activity">
    <reaction evidence="1">
        <text>AMP + ATP = 2 ADP</text>
        <dbReference type="Rhea" id="RHEA:12973"/>
        <dbReference type="ChEBI" id="CHEBI:30616"/>
        <dbReference type="ChEBI" id="CHEBI:456215"/>
        <dbReference type="ChEBI" id="CHEBI:456216"/>
        <dbReference type="EC" id="2.7.4.3"/>
    </reaction>
</comment>
<comment type="pathway">
    <text evidence="1">Purine metabolism; AMP biosynthesis via salvage pathway; AMP from ADP: step 1/1.</text>
</comment>
<comment type="subunit">
    <text evidence="1">Monomer.</text>
</comment>
<comment type="subcellular location">
    <subcellularLocation>
        <location evidence="1">Cytoplasm</location>
    </subcellularLocation>
</comment>
<comment type="domain">
    <text evidence="1">Consists of three domains, a large central CORE domain and two small peripheral domains, NMPbind and LID, which undergo movements during catalysis. The LID domain closes over the site of phosphoryl transfer upon ATP binding. Assembling and dissambling the active center during each catalytic cycle provides an effective means to prevent ATP hydrolysis.</text>
</comment>
<comment type="similarity">
    <text evidence="1">Belongs to the adenylate kinase family.</text>
</comment>
<keyword id="KW-0067">ATP-binding</keyword>
<keyword id="KW-0963">Cytoplasm</keyword>
<keyword id="KW-0418">Kinase</keyword>
<keyword id="KW-0545">Nucleotide biosynthesis</keyword>
<keyword id="KW-0547">Nucleotide-binding</keyword>
<keyword id="KW-0808">Transferase</keyword>
<accession>Q48F36</accession>
<dbReference type="EC" id="2.7.4.3" evidence="1"/>
<dbReference type="EMBL" id="CP000058">
    <property type="protein sequence ID" value="AAZ36137.1"/>
    <property type="molecule type" value="Genomic_DNA"/>
</dbReference>
<dbReference type="RefSeq" id="WP_011169310.1">
    <property type="nucleotide sequence ID" value="NC_005773.3"/>
</dbReference>
<dbReference type="SMR" id="Q48F36"/>
<dbReference type="KEGG" id="psp:PSPPH_3863"/>
<dbReference type="eggNOG" id="COG0563">
    <property type="taxonomic scope" value="Bacteria"/>
</dbReference>
<dbReference type="HOGENOM" id="CLU_032354_1_2_6"/>
<dbReference type="UniPathway" id="UPA00588">
    <property type="reaction ID" value="UER00649"/>
</dbReference>
<dbReference type="Proteomes" id="UP000000551">
    <property type="component" value="Chromosome"/>
</dbReference>
<dbReference type="GO" id="GO:0005737">
    <property type="term" value="C:cytoplasm"/>
    <property type="evidence" value="ECO:0007669"/>
    <property type="project" value="UniProtKB-SubCell"/>
</dbReference>
<dbReference type="GO" id="GO:0004017">
    <property type="term" value="F:adenylate kinase activity"/>
    <property type="evidence" value="ECO:0007669"/>
    <property type="project" value="UniProtKB-UniRule"/>
</dbReference>
<dbReference type="GO" id="GO:0005524">
    <property type="term" value="F:ATP binding"/>
    <property type="evidence" value="ECO:0007669"/>
    <property type="project" value="UniProtKB-UniRule"/>
</dbReference>
<dbReference type="GO" id="GO:0044209">
    <property type="term" value="P:AMP salvage"/>
    <property type="evidence" value="ECO:0007669"/>
    <property type="project" value="UniProtKB-UniRule"/>
</dbReference>
<dbReference type="CDD" id="cd01428">
    <property type="entry name" value="ADK"/>
    <property type="match status" value="1"/>
</dbReference>
<dbReference type="FunFam" id="3.40.50.300:FF:000106">
    <property type="entry name" value="Adenylate kinase mitochondrial"/>
    <property type="match status" value="1"/>
</dbReference>
<dbReference type="Gene3D" id="3.40.50.300">
    <property type="entry name" value="P-loop containing nucleotide triphosphate hydrolases"/>
    <property type="match status" value="1"/>
</dbReference>
<dbReference type="HAMAP" id="MF_00235">
    <property type="entry name" value="Adenylate_kinase_Adk"/>
    <property type="match status" value="1"/>
</dbReference>
<dbReference type="InterPro" id="IPR006259">
    <property type="entry name" value="Adenyl_kin_sub"/>
</dbReference>
<dbReference type="InterPro" id="IPR000850">
    <property type="entry name" value="Adenylat/UMP-CMP_kin"/>
</dbReference>
<dbReference type="InterPro" id="IPR033690">
    <property type="entry name" value="Adenylat_kinase_CS"/>
</dbReference>
<dbReference type="InterPro" id="IPR007862">
    <property type="entry name" value="Adenylate_kinase_lid-dom"/>
</dbReference>
<dbReference type="InterPro" id="IPR027417">
    <property type="entry name" value="P-loop_NTPase"/>
</dbReference>
<dbReference type="NCBIfam" id="TIGR01351">
    <property type="entry name" value="adk"/>
    <property type="match status" value="1"/>
</dbReference>
<dbReference type="NCBIfam" id="NF001379">
    <property type="entry name" value="PRK00279.1-1"/>
    <property type="match status" value="1"/>
</dbReference>
<dbReference type="NCBIfam" id="NF001380">
    <property type="entry name" value="PRK00279.1-2"/>
    <property type="match status" value="1"/>
</dbReference>
<dbReference type="NCBIfam" id="NF001381">
    <property type="entry name" value="PRK00279.1-3"/>
    <property type="match status" value="1"/>
</dbReference>
<dbReference type="NCBIfam" id="NF011100">
    <property type="entry name" value="PRK14527.1"/>
    <property type="match status" value="1"/>
</dbReference>
<dbReference type="PANTHER" id="PTHR23359">
    <property type="entry name" value="NUCLEOTIDE KINASE"/>
    <property type="match status" value="1"/>
</dbReference>
<dbReference type="Pfam" id="PF00406">
    <property type="entry name" value="ADK"/>
    <property type="match status" value="1"/>
</dbReference>
<dbReference type="Pfam" id="PF05191">
    <property type="entry name" value="ADK_lid"/>
    <property type="match status" value="1"/>
</dbReference>
<dbReference type="PRINTS" id="PR00094">
    <property type="entry name" value="ADENYLTKNASE"/>
</dbReference>
<dbReference type="SUPFAM" id="SSF52540">
    <property type="entry name" value="P-loop containing nucleoside triphosphate hydrolases"/>
    <property type="match status" value="1"/>
</dbReference>
<dbReference type="PROSITE" id="PS00113">
    <property type="entry name" value="ADENYLATE_KINASE"/>
    <property type="match status" value="1"/>
</dbReference>
<gene>
    <name evidence="1" type="primary">adk</name>
    <name type="ordered locus">PSPPH_3863</name>
</gene>
<reference key="1">
    <citation type="journal article" date="2005" name="J. Bacteriol.">
        <title>Whole-genome sequence analysis of Pseudomonas syringae pv. phaseolicola 1448A reveals divergence among pathovars in genes involved in virulence and transposition.</title>
        <authorList>
            <person name="Joardar V."/>
            <person name="Lindeberg M."/>
            <person name="Jackson R.W."/>
            <person name="Selengut J."/>
            <person name="Dodson R."/>
            <person name="Brinkac L.M."/>
            <person name="Daugherty S.C."/>
            <person name="DeBoy R.T."/>
            <person name="Durkin A.S."/>
            <person name="Gwinn Giglio M."/>
            <person name="Madupu R."/>
            <person name="Nelson W.C."/>
            <person name="Rosovitz M.J."/>
            <person name="Sullivan S.A."/>
            <person name="Crabtree J."/>
            <person name="Creasy T."/>
            <person name="Davidsen T.M."/>
            <person name="Haft D.H."/>
            <person name="Zafar N."/>
            <person name="Zhou L."/>
            <person name="Halpin R."/>
            <person name="Holley T."/>
            <person name="Khouri H.M."/>
            <person name="Feldblyum T.V."/>
            <person name="White O."/>
            <person name="Fraser C.M."/>
            <person name="Chatterjee A.K."/>
            <person name="Cartinhour S."/>
            <person name="Schneider D."/>
            <person name="Mansfield J.W."/>
            <person name="Collmer A."/>
            <person name="Buell R."/>
        </authorList>
    </citation>
    <scope>NUCLEOTIDE SEQUENCE [LARGE SCALE GENOMIC DNA]</scope>
    <source>
        <strain>1448A / Race 6</strain>
    </source>
</reference>
<sequence>MRVILLGAPGAGKGTQAKFITEKFGIPQVSTGDMLRAAVKAETELGLKAKSVMDSGGLVSDDLIIGLIKDRLAQPDCANGVLFDGFPRTIPQAEALLKAGLEIDHVLEIAVDDEEIVKRMSGRRVHEGSGRIYHTIFNPPKVECIDDVTGEPLLQRKDDVEETVRHRLSVYHAQTKPLVEFYSKLEAKDGKPKCSHIPGVGSVEEITAKVLEALK</sequence>
<evidence type="ECO:0000255" key="1">
    <source>
        <dbReference type="HAMAP-Rule" id="MF_00235"/>
    </source>
</evidence>